<gene>
    <name evidence="1" type="primary">panC</name>
    <name type="ordered locus">TGRD_198</name>
</gene>
<keyword id="KW-0067">ATP-binding</keyword>
<keyword id="KW-0963">Cytoplasm</keyword>
<keyword id="KW-0436">Ligase</keyword>
<keyword id="KW-0547">Nucleotide-binding</keyword>
<keyword id="KW-0566">Pantothenate biosynthesis</keyword>
<sequence length="283" mass="32135">MKIIKNASQMQKIALRHIKNGDEIGLVPTMGALHEGHISLIAKSVKNDDITIVSIFVNPIQFGPNEDYLKYPRPVKKDKEICKKNHVDYVFMPSVNDMFPADHKTFIEVKTLQDILCGAFRINHFKGVATVIAKLFNISCADRAYFGMKDFQQLKIIEKMGKDLNFRTKIIPCSIVRERNGLALSSRNSYLSAEGKKRSLNISKSLKEAAEDFKRRDLNFVKKTVINKLKKIPGSEIDYAEIVNFDDLLPADKNTKKAVFAVAVWIGKTRLIDNIMMIKDKDS</sequence>
<accession>B1GZJ9</accession>
<evidence type="ECO:0000255" key="1">
    <source>
        <dbReference type="HAMAP-Rule" id="MF_00158"/>
    </source>
</evidence>
<proteinExistence type="inferred from homology"/>
<name>PANC_ENDTX</name>
<dbReference type="EC" id="6.3.2.1" evidence="1"/>
<dbReference type="EMBL" id="AP009510">
    <property type="protein sequence ID" value="BAG13681.1"/>
    <property type="molecule type" value="Genomic_DNA"/>
</dbReference>
<dbReference type="RefSeq" id="WP_015423209.1">
    <property type="nucleotide sequence ID" value="NC_020419.1"/>
</dbReference>
<dbReference type="SMR" id="B1GZJ9"/>
<dbReference type="STRING" id="471821.TGRD_198"/>
<dbReference type="KEGG" id="rsd:TGRD_198"/>
<dbReference type="PATRIC" id="fig|471821.5.peg.303"/>
<dbReference type="HOGENOM" id="CLU_047148_0_0_0"/>
<dbReference type="UniPathway" id="UPA00028">
    <property type="reaction ID" value="UER00005"/>
</dbReference>
<dbReference type="Proteomes" id="UP000001691">
    <property type="component" value="Chromosome"/>
</dbReference>
<dbReference type="GO" id="GO:0005829">
    <property type="term" value="C:cytosol"/>
    <property type="evidence" value="ECO:0007669"/>
    <property type="project" value="TreeGrafter"/>
</dbReference>
<dbReference type="GO" id="GO:0005524">
    <property type="term" value="F:ATP binding"/>
    <property type="evidence" value="ECO:0007669"/>
    <property type="project" value="UniProtKB-KW"/>
</dbReference>
<dbReference type="GO" id="GO:0004592">
    <property type="term" value="F:pantoate-beta-alanine ligase activity"/>
    <property type="evidence" value="ECO:0007669"/>
    <property type="project" value="UniProtKB-UniRule"/>
</dbReference>
<dbReference type="GO" id="GO:0015940">
    <property type="term" value="P:pantothenate biosynthetic process"/>
    <property type="evidence" value="ECO:0007669"/>
    <property type="project" value="UniProtKB-UniRule"/>
</dbReference>
<dbReference type="CDD" id="cd00560">
    <property type="entry name" value="PanC"/>
    <property type="match status" value="1"/>
</dbReference>
<dbReference type="FunFam" id="3.40.50.620:FF:000013">
    <property type="entry name" value="Pantothenate synthetase"/>
    <property type="match status" value="1"/>
</dbReference>
<dbReference type="Gene3D" id="3.40.50.620">
    <property type="entry name" value="HUPs"/>
    <property type="match status" value="1"/>
</dbReference>
<dbReference type="Gene3D" id="3.30.1300.10">
    <property type="entry name" value="Pantoate-beta-alanine ligase, C-terminal domain"/>
    <property type="match status" value="1"/>
</dbReference>
<dbReference type="HAMAP" id="MF_00158">
    <property type="entry name" value="PanC"/>
    <property type="match status" value="1"/>
</dbReference>
<dbReference type="InterPro" id="IPR003721">
    <property type="entry name" value="Pantoate_ligase"/>
</dbReference>
<dbReference type="InterPro" id="IPR042176">
    <property type="entry name" value="Pantoate_ligase_C"/>
</dbReference>
<dbReference type="InterPro" id="IPR014729">
    <property type="entry name" value="Rossmann-like_a/b/a_fold"/>
</dbReference>
<dbReference type="NCBIfam" id="TIGR00018">
    <property type="entry name" value="panC"/>
    <property type="match status" value="1"/>
</dbReference>
<dbReference type="PANTHER" id="PTHR21299">
    <property type="entry name" value="CYTIDYLATE KINASE/PANTOATE-BETA-ALANINE LIGASE"/>
    <property type="match status" value="1"/>
</dbReference>
<dbReference type="PANTHER" id="PTHR21299:SF1">
    <property type="entry name" value="PANTOATE--BETA-ALANINE LIGASE"/>
    <property type="match status" value="1"/>
</dbReference>
<dbReference type="Pfam" id="PF02569">
    <property type="entry name" value="Pantoate_ligase"/>
    <property type="match status" value="1"/>
</dbReference>
<dbReference type="SUPFAM" id="SSF52374">
    <property type="entry name" value="Nucleotidylyl transferase"/>
    <property type="match status" value="1"/>
</dbReference>
<comment type="function">
    <text evidence="1">Catalyzes the condensation of pantoate with beta-alanine in an ATP-dependent reaction via a pantoyl-adenylate intermediate.</text>
</comment>
<comment type="catalytic activity">
    <reaction evidence="1">
        <text>(R)-pantoate + beta-alanine + ATP = (R)-pantothenate + AMP + diphosphate + H(+)</text>
        <dbReference type="Rhea" id="RHEA:10912"/>
        <dbReference type="ChEBI" id="CHEBI:15378"/>
        <dbReference type="ChEBI" id="CHEBI:15980"/>
        <dbReference type="ChEBI" id="CHEBI:29032"/>
        <dbReference type="ChEBI" id="CHEBI:30616"/>
        <dbReference type="ChEBI" id="CHEBI:33019"/>
        <dbReference type="ChEBI" id="CHEBI:57966"/>
        <dbReference type="ChEBI" id="CHEBI:456215"/>
        <dbReference type="EC" id="6.3.2.1"/>
    </reaction>
</comment>
<comment type="pathway">
    <text evidence="1">Cofactor biosynthesis; (R)-pantothenate biosynthesis; (R)-pantothenate from (R)-pantoate and beta-alanine: step 1/1.</text>
</comment>
<comment type="subunit">
    <text evidence="1">Homodimer.</text>
</comment>
<comment type="subcellular location">
    <subcellularLocation>
        <location evidence="1">Cytoplasm</location>
    </subcellularLocation>
</comment>
<comment type="miscellaneous">
    <text evidence="1">The reaction proceeds by a bi uni uni bi ping pong mechanism.</text>
</comment>
<comment type="similarity">
    <text evidence="1">Belongs to the pantothenate synthetase family.</text>
</comment>
<reference key="1">
    <citation type="journal article" date="2008" name="Proc. Natl. Acad. Sci. U.S.A.">
        <title>Complete genome of the uncultured termite group 1 bacteria in a single host protist cell.</title>
        <authorList>
            <person name="Hongoh Y."/>
            <person name="Sharma V.K."/>
            <person name="Prakash T."/>
            <person name="Noda S."/>
            <person name="Taylor T.D."/>
            <person name="Kudo T."/>
            <person name="Sakaki Y."/>
            <person name="Toyoda A."/>
            <person name="Hattori M."/>
            <person name="Ohkuma M."/>
        </authorList>
    </citation>
    <scope>NUCLEOTIDE SEQUENCE [LARGE SCALE GENOMIC DNA]</scope>
</reference>
<feature type="chain" id="PRO_1000097124" description="Pantothenate synthetase">
    <location>
        <begin position="1"/>
        <end position="283"/>
    </location>
</feature>
<feature type="active site" description="Proton donor" evidence="1">
    <location>
        <position position="37"/>
    </location>
</feature>
<feature type="binding site" evidence="1">
    <location>
        <begin position="30"/>
        <end position="37"/>
    </location>
    <ligand>
        <name>ATP</name>
        <dbReference type="ChEBI" id="CHEBI:30616"/>
    </ligand>
</feature>
<feature type="binding site" evidence="1">
    <location>
        <position position="61"/>
    </location>
    <ligand>
        <name>(R)-pantoate</name>
        <dbReference type="ChEBI" id="CHEBI:15980"/>
    </ligand>
</feature>
<feature type="binding site" evidence="1">
    <location>
        <position position="61"/>
    </location>
    <ligand>
        <name>beta-alanine</name>
        <dbReference type="ChEBI" id="CHEBI:57966"/>
    </ligand>
</feature>
<feature type="binding site" evidence="1">
    <location>
        <begin position="147"/>
        <end position="150"/>
    </location>
    <ligand>
        <name>ATP</name>
        <dbReference type="ChEBI" id="CHEBI:30616"/>
    </ligand>
</feature>
<feature type="binding site" evidence="1">
    <location>
        <position position="153"/>
    </location>
    <ligand>
        <name>(R)-pantoate</name>
        <dbReference type="ChEBI" id="CHEBI:15980"/>
    </ligand>
</feature>
<feature type="binding site" evidence="1">
    <location>
        <position position="176"/>
    </location>
    <ligand>
        <name>ATP</name>
        <dbReference type="ChEBI" id="CHEBI:30616"/>
    </ligand>
</feature>
<feature type="binding site" evidence="1">
    <location>
        <begin position="184"/>
        <end position="187"/>
    </location>
    <ligand>
        <name>ATP</name>
        <dbReference type="ChEBI" id="CHEBI:30616"/>
    </ligand>
</feature>
<protein>
    <recommendedName>
        <fullName evidence="1">Pantothenate synthetase</fullName>
        <shortName evidence="1">PS</shortName>
        <ecNumber evidence="1">6.3.2.1</ecNumber>
    </recommendedName>
    <alternativeName>
        <fullName evidence="1">Pantoate--beta-alanine ligase</fullName>
    </alternativeName>
    <alternativeName>
        <fullName evidence="1">Pantoate-activating enzyme</fullName>
    </alternativeName>
</protein>
<organism>
    <name type="scientific">Endomicrobium trichonymphae</name>
    <dbReference type="NCBI Taxonomy" id="1408204"/>
    <lineage>
        <taxon>Bacteria</taxon>
        <taxon>Pseudomonadati</taxon>
        <taxon>Elusimicrobiota</taxon>
        <taxon>Endomicrobiia</taxon>
        <taxon>Endomicrobiales</taxon>
        <taxon>Endomicrobiaceae</taxon>
        <taxon>Candidatus Endomicrobiellum</taxon>
    </lineage>
</organism>